<sequence length="127" mass="14268">MIKKIIFGIAILLSLSCFANSTTSDGSKKDAAKTNDGTTQKIIDDFSAYAGTIKPEVRKEIQEYRVEIVDINKKKRELYNSLSKEAQNFLAEQQKYKQKLSISKLPTEDDSPNNTANSKDNKDTDTK</sequence>
<protein>
    <recommendedName>
        <fullName>Uncharacterized lipoprotein RF_0128</fullName>
    </recommendedName>
</protein>
<proteinExistence type="inferred from homology"/>
<dbReference type="EMBL" id="CP000053">
    <property type="protein sequence ID" value="AAY60979.1"/>
    <property type="status" value="ALT_INIT"/>
    <property type="molecule type" value="Genomic_DNA"/>
</dbReference>
<dbReference type="SMR" id="Q4UN79"/>
<dbReference type="KEGG" id="rfe:RF_0128"/>
<dbReference type="HOGENOM" id="CLU_1968884_0_0_5"/>
<dbReference type="OrthoDB" id="7160930at2"/>
<dbReference type="Proteomes" id="UP000008548">
    <property type="component" value="Chromosome"/>
</dbReference>
<dbReference type="GO" id="GO:0005886">
    <property type="term" value="C:plasma membrane"/>
    <property type="evidence" value="ECO:0007669"/>
    <property type="project" value="UniProtKB-SubCell"/>
</dbReference>
<dbReference type="PROSITE" id="PS51257">
    <property type="entry name" value="PROKAR_LIPOPROTEIN"/>
    <property type="match status" value="1"/>
</dbReference>
<name>Y128_RICFE</name>
<gene>
    <name type="ordered locus">RF_0128</name>
</gene>
<feature type="signal peptide" evidence="2">
    <location>
        <begin position="1"/>
        <end position="16"/>
    </location>
</feature>
<feature type="chain" id="PRO_0000262727" description="Uncharacterized lipoprotein RF_0128">
    <location>
        <begin position="17"/>
        <end position="127"/>
    </location>
</feature>
<feature type="region of interest" description="Disordered" evidence="3">
    <location>
        <begin position="101"/>
        <end position="127"/>
    </location>
</feature>
<feature type="coiled-coil region" evidence="1">
    <location>
        <begin position="56"/>
        <end position="101"/>
    </location>
</feature>
<feature type="lipid moiety-binding region" description="N-palmitoyl cysteine" evidence="2">
    <location>
        <position position="17"/>
    </location>
</feature>
<feature type="lipid moiety-binding region" description="S-diacylglycerol cysteine" evidence="2">
    <location>
        <position position="17"/>
    </location>
</feature>
<organism>
    <name type="scientific">Rickettsia felis (strain ATCC VR-1525 / URRWXCal2)</name>
    <name type="common">Rickettsia azadi</name>
    <dbReference type="NCBI Taxonomy" id="315456"/>
    <lineage>
        <taxon>Bacteria</taxon>
        <taxon>Pseudomonadati</taxon>
        <taxon>Pseudomonadota</taxon>
        <taxon>Alphaproteobacteria</taxon>
        <taxon>Rickettsiales</taxon>
        <taxon>Rickettsiaceae</taxon>
        <taxon>Rickettsieae</taxon>
        <taxon>Rickettsia</taxon>
        <taxon>spotted fever group</taxon>
    </lineage>
</organism>
<reference key="1">
    <citation type="journal article" date="2005" name="PLoS Biol.">
        <title>The genome sequence of Rickettsia felis identifies the first putative conjugative plasmid in an obligate intracellular parasite.</title>
        <authorList>
            <person name="Ogata H."/>
            <person name="Renesto P."/>
            <person name="Audic S."/>
            <person name="Robert C."/>
            <person name="Blanc G."/>
            <person name="Fournier P.-E."/>
            <person name="Parinello H."/>
            <person name="Claverie J.-M."/>
            <person name="Raoult D."/>
        </authorList>
    </citation>
    <scope>NUCLEOTIDE SEQUENCE [LARGE SCALE GENOMIC DNA]</scope>
    <source>
        <strain>ATCC VR-1525 / URRWXCal2</strain>
    </source>
</reference>
<evidence type="ECO:0000255" key="1"/>
<evidence type="ECO:0000255" key="2">
    <source>
        <dbReference type="PROSITE-ProRule" id="PRU00303"/>
    </source>
</evidence>
<evidence type="ECO:0000256" key="3">
    <source>
        <dbReference type="SAM" id="MobiDB-lite"/>
    </source>
</evidence>
<evidence type="ECO:0000305" key="4"/>
<comment type="subcellular location">
    <subcellularLocation>
        <location evidence="2">Cell membrane</location>
        <topology evidence="2">Lipid-anchor</topology>
    </subcellularLocation>
</comment>
<comment type="sequence caution" evidence="4">
    <conflict type="erroneous initiation">
        <sequence resource="EMBL-CDS" id="AAY60979"/>
    </conflict>
</comment>
<keyword id="KW-1003">Cell membrane</keyword>
<keyword id="KW-0175">Coiled coil</keyword>
<keyword id="KW-0449">Lipoprotein</keyword>
<keyword id="KW-0472">Membrane</keyword>
<keyword id="KW-0564">Palmitate</keyword>
<keyword id="KW-0732">Signal</keyword>
<accession>Q4UN79</accession>